<accession>Q28156</accession>
<proteinExistence type="evidence at protein level"/>
<gene>
    <name type="primary">PDE5A</name>
    <name type="synonym">PDE5</name>
</gene>
<organism>
    <name type="scientific">Bos taurus</name>
    <name type="common">Bovine</name>
    <dbReference type="NCBI Taxonomy" id="9913"/>
    <lineage>
        <taxon>Eukaryota</taxon>
        <taxon>Metazoa</taxon>
        <taxon>Chordata</taxon>
        <taxon>Craniata</taxon>
        <taxon>Vertebrata</taxon>
        <taxon>Euteleostomi</taxon>
        <taxon>Mammalia</taxon>
        <taxon>Eutheria</taxon>
        <taxon>Laurasiatheria</taxon>
        <taxon>Artiodactyla</taxon>
        <taxon>Ruminantia</taxon>
        <taxon>Pecora</taxon>
        <taxon>Bovidae</taxon>
        <taxon>Bovinae</taxon>
        <taxon>Bos</taxon>
    </lineage>
</organism>
<name>PDE5A_BOVIN</name>
<feature type="chain" id="PRO_0000198821" description="cGMP-specific 3',5'-cyclic phosphodiesterase">
    <location>
        <begin position="1"/>
        <end position="865"/>
    </location>
</feature>
<feature type="domain" description="GAF 1">
    <location>
        <begin position="154"/>
        <end position="304"/>
    </location>
</feature>
<feature type="domain" description="GAF 2">
    <location>
        <begin position="336"/>
        <end position="493"/>
    </location>
</feature>
<feature type="domain" description="PDEase" evidence="5">
    <location>
        <begin position="526"/>
        <end position="850"/>
    </location>
</feature>
<feature type="active site" description="Proton donor" evidence="3">
    <location>
        <position position="603"/>
    </location>
</feature>
<feature type="binding site" evidence="2">
    <location>
        <position position="607"/>
    </location>
    <ligand>
        <name>Zn(2+)</name>
        <dbReference type="ChEBI" id="CHEBI:29105"/>
    </ligand>
</feature>
<feature type="binding site" evidence="2">
    <location>
        <position position="643"/>
    </location>
    <ligand>
        <name>Zn(2+)</name>
        <dbReference type="ChEBI" id="CHEBI:29105"/>
    </ligand>
</feature>
<feature type="binding site" evidence="2">
    <location>
        <position position="644"/>
    </location>
    <ligand>
        <name>Mg(2+)</name>
        <dbReference type="ChEBI" id="CHEBI:18420"/>
    </ligand>
</feature>
<feature type="binding site" evidence="2">
    <location>
        <position position="644"/>
    </location>
    <ligand>
        <name>Zn(2+)</name>
        <dbReference type="ChEBI" id="CHEBI:29105"/>
    </ligand>
</feature>
<feature type="binding site" evidence="2">
    <location>
        <position position="754"/>
    </location>
    <ligand>
        <name>Zn(2+)</name>
        <dbReference type="ChEBI" id="CHEBI:29105"/>
    </ligand>
</feature>
<feature type="binding site" evidence="2">
    <location>
        <position position="807"/>
    </location>
    <ligand>
        <name>3',5'-cyclic GMP</name>
        <dbReference type="ChEBI" id="CHEBI:57746"/>
    </ligand>
</feature>
<feature type="modified residue" description="Phosphoserine" evidence="4">
    <location>
        <position position="92"/>
    </location>
</feature>
<feature type="mutagenesis site" description="Decreased cGMP-binding; no change in catalytic activity." evidence="7">
    <original>N</original>
    <variation>A</variation>
    <location>
        <position position="276"/>
    </location>
</feature>
<feature type="mutagenesis site" description="Decreased cGMP-binding; no change in catalytic activity." evidence="7">
    <original>K</original>
    <variation>A</variation>
    <location>
        <position position="277"/>
    </location>
</feature>
<feature type="mutagenesis site" description="Slight increase in cGMP-binding." evidence="7">
    <original>K</original>
    <variation>R</variation>
    <location>
        <position position="277"/>
    </location>
</feature>
<feature type="mutagenesis site" description="Decreased cGMP-binding; no change in catalytic activity." evidence="6 7 8">
    <original>D</original>
    <variation>A</variation>
    <location>
        <position position="289"/>
    </location>
</feature>
<feature type="mutagenesis site" description="Increased cGMP-binding; no change in catalytic activity." evidence="6 7 8">
    <original>D</original>
    <variation>N</variation>
    <location>
        <position position="289"/>
    </location>
</feature>
<feature type="mutagenesis site" description="No change in cGMP-binding." evidence="7">
    <original>E</original>
    <variation>A</variation>
    <location>
        <position position="290"/>
    </location>
</feature>
<feature type="mutagenesis site" description="Increased cGMP-binding; no change in catalytic activity. Phosphorylated at lower concentrations of cGMP." evidence="6 8">
    <original>D</original>
    <variation>A</variation>
    <location>
        <position position="478"/>
    </location>
</feature>
<comment type="function">
    <text evidence="2 6">Plays a role in signal transduction by regulating the intracellular concentration of cyclic nucleotides. This phosphodiesterase catalyzes the specific hydrolysis of cGMP to 5'-GMP (PubMed:8530505). Specifically regulates nitric-oxide-generated cGMP (By similarity).</text>
</comment>
<comment type="catalytic activity">
    <reaction evidence="2">
        <text>3',5'-cyclic GMP + H2O = GMP + H(+)</text>
        <dbReference type="Rhea" id="RHEA:16957"/>
        <dbReference type="ChEBI" id="CHEBI:15377"/>
        <dbReference type="ChEBI" id="CHEBI:15378"/>
        <dbReference type="ChEBI" id="CHEBI:57746"/>
        <dbReference type="ChEBI" id="CHEBI:58115"/>
        <dbReference type="EC" id="3.1.4.35"/>
    </reaction>
    <physiologicalReaction direction="left-to-right" evidence="2">
        <dbReference type="Rhea" id="RHEA:16958"/>
    </physiologicalReaction>
</comment>
<comment type="cofactor">
    <cofactor evidence="2">
        <name>Zn(2+)</name>
        <dbReference type="ChEBI" id="CHEBI:29105"/>
    </cofactor>
    <text evidence="2">Binds 1 Zn(2+) ion per subunit. Binds 2 divalent metal cations per subunit: site 1 preferentially binds zinc, while site 2 has a preference for magnesium. Tightly binds zinc.</text>
</comment>
<comment type="cofactor">
    <cofactor evidence="2">
        <name>Mg(2+)</name>
        <dbReference type="ChEBI" id="CHEBI:18420"/>
    </cofactor>
    <text evidence="2">Binds 1 Mg(2+) ions per subunit. Binds 2 divalent metal cations per subunit: site 1 preferentially binds zinc, while site 2 has a preference for magnesium. Binds magnesium less tightly than zinc.</text>
</comment>
<comment type="activity regulation">
    <text>Most potently inhibited by zaprinast and dipyridamole.</text>
</comment>
<comment type="pathway">
    <text>Purine metabolism; 3',5'-cyclic GMP degradation; GMP from 3',5'-cyclic GMP: step 1/1.</text>
</comment>
<comment type="domain">
    <text>Composed of a C-terminal catalytic domain containing two putative divalent metal sites and an N-terminal regulatory domain which contains two homologous allosteric cGMP-binding regions, A and B.</text>
</comment>
<comment type="PTM">
    <text evidence="1">Phosphorylation is regulated by binding of cGMP to the two allosteric sites. Phosphorylation by PRKG1 leads to its activation (By similarity).</text>
</comment>
<comment type="similarity">
    <text evidence="9">Belongs to the cyclic nucleotide phosphodiesterase family.</text>
</comment>
<dbReference type="EC" id="3.1.4.35" evidence="2"/>
<dbReference type="EMBL" id="L16545">
    <property type="protein sequence ID" value="AAB00990.1"/>
    <property type="molecule type" value="mRNA"/>
</dbReference>
<dbReference type="RefSeq" id="NP_776842.1">
    <property type="nucleotide sequence ID" value="NM_174417.2"/>
</dbReference>
<dbReference type="PDB" id="3JAB">
    <property type="method" value="EM"/>
    <property type="resolution" value="11.00 A"/>
    <property type="chains" value="C/O=525-850"/>
</dbReference>
<dbReference type="PDB" id="3JBQ">
    <property type="method" value="EM"/>
    <property type="resolution" value="11.00 A"/>
    <property type="chains" value="B/F=525-850"/>
</dbReference>
<dbReference type="PDBsum" id="3JAB"/>
<dbReference type="PDBsum" id="3JBQ"/>
<dbReference type="EMDB" id="EMD-6258"/>
<dbReference type="SMR" id="Q28156"/>
<dbReference type="BioGRID" id="159263">
    <property type="interactions" value="1"/>
</dbReference>
<dbReference type="CORUM" id="Q28156"/>
<dbReference type="FunCoup" id="Q28156">
    <property type="interactions" value="1290"/>
</dbReference>
<dbReference type="STRING" id="9913.ENSBTAP00000014479"/>
<dbReference type="BindingDB" id="Q28156"/>
<dbReference type="ChEMBL" id="CHEMBL3478"/>
<dbReference type="DrugCentral" id="Q28156"/>
<dbReference type="iPTMnet" id="Q28156"/>
<dbReference type="PaxDb" id="9913-ENSBTAP00000014479"/>
<dbReference type="Ensembl" id="ENSBTAT00000014479.6">
    <property type="protein sequence ID" value="ENSBTAP00000014479.4"/>
    <property type="gene ID" value="ENSBTAG00000024888.6"/>
</dbReference>
<dbReference type="GeneID" id="281972"/>
<dbReference type="KEGG" id="bta:281972"/>
<dbReference type="CTD" id="8654"/>
<dbReference type="VEuPathDB" id="HostDB:ENSBTAG00000024888"/>
<dbReference type="VGNC" id="VGNC:32678">
    <property type="gene designation" value="PDE5A"/>
</dbReference>
<dbReference type="eggNOG" id="KOG3689">
    <property type="taxonomic scope" value="Eukaryota"/>
</dbReference>
<dbReference type="GeneTree" id="ENSGT00940000155475"/>
<dbReference type="HOGENOM" id="CLU_006980_0_2_1"/>
<dbReference type="InParanoid" id="Q28156"/>
<dbReference type="OrthoDB" id="74705at2759"/>
<dbReference type="TreeFam" id="TF316499"/>
<dbReference type="Reactome" id="R-BTA-418457">
    <property type="pathway name" value="cGMP effects"/>
</dbReference>
<dbReference type="Reactome" id="R-BTA-445355">
    <property type="pathway name" value="Smooth Muscle Contraction"/>
</dbReference>
<dbReference type="Reactome" id="R-BTA-9013422">
    <property type="pathway name" value="RHOBTB1 GTPase cycle"/>
</dbReference>
<dbReference type="UniPathway" id="UPA00763">
    <property type="reaction ID" value="UER00748"/>
</dbReference>
<dbReference type="EvolutionaryTrace" id="Q28156"/>
<dbReference type="PRO" id="PR:Q28156"/>
<dbReference type="Proteomes" id="UP000009136">
    <property type="component" value="Chromosome 6"/>
</dbReference>
<dbReference type="Bgee" id="ENSBTAG00000024888">
    <property type="expression patterns" value="Expressed in spiral colon and 109 other cell types or tissues"/>
</dbReference>
<dbReference type="GO" id="GO:0004115">
    <property type="term" value="F:3',5'-cyclic-AMP phosphodiesterase activity"/>
    <property type="evidence" value="ECO:0000318"/>
    <property type="project" value="GO_Central"/>
</dbReference>
<dbReference type="GO" id="GO:0047555">
    <property type="term" value="F:3',5'-cyclic-GMP phosphodiesterase activity"/>
    <property type="evidence" value="ECO:0000250"/>
    <property type="project" value="AgBase"/>
</dbReference>
<dbReference type="GO" id="GO:0030553">
    <property type="term" value="F:cGMP binding"/>
    <property type="evidence" value="ECO:0000250"/>
    <property type="project" value="AgBase"/>
</dbReference>
<dbReference type="GO" id="GO:0004112">
    <property type="term" value="F:cyclic-nucleotide phosphodiesterase activity"/>
    <property type="evidence" value="ECO:0000250"/>
    <property type="project" value="AgBase"/>
</dbReference>
<dbReference type="GO" id="GO:0046872">
    <property type="term" value="F:metal ion binding"/>
    <property type="evidence" value="ECO:0007669"/>
    <property type="project" value="UniProtKB-KW"/>
</dbReference>
<dbReference type="GO" id="GO:0019933">
    <property type="term" value="P:cAMP-mediated signaling"/>
    <property type="evidence" value="ECO:0000318"/>
    <property type="project" value="GO_Central"/>
</dbReference>
<dbReference type="GO" id="GO:0046069">
    <property type="term" value="P:cGMP catabolic process"/>
    <property type="evidence" value="ECO:0000250"/>
    <property type="project" value="AgBase"/>
</dbReference>
<dbReference type="CDD" id="cd00077">
    <property type="entry name" value="HDc"/>
    <property type="match status" value="1"/>
</dbReference>
<dbReference type="FunFam" id="1.10.1300.10:FF:000003">
    <property type="entry name" value="Phosphodiesterase"/>
    <property type="match status" value="1"/>
</dbReference>
<dbReference type="FunFam" id="3.30.450.40:FF:000004">
    <property type="entry name" value="Phosphodiesterase"/>
    <property type="match status" value="1"/>
</dbReference>
<dbReference type="FunFam" id="3.30.450.40:FF:000015">
    <property type="entry name" value="Phosphodiesterase"/>
    <property type="match status" value="1"/>
</dbReference>
<dbReference type="Gene3D" id="3.30.450.40">
    <property type="match status" value="2"/>
</dbReference>
<dbReference type="Gene3D" id="1.10.1300.10">
    <property type="entry name" value="3'5'-cyclic nucleotide phosphodiesterase, catalytic domain"/>
    <property type="match status" value="1"/>
</dbReference>
<dbReference type="InterPro" id="IPR003018">
    <property type="entry name" value="GAF"/>
</dbReference>
<dbReference type="InterPro" id="IPR029016">
    <property type="entry name" value="GAF-like_dom_sf"/>
</dbReference>
<dbReference type="InterPro" id="IPR003607">
    <property type="entry name" value="HD/PDEase_dom"/>
</dbReference>
<dbReference type="InterPro" id="IPR023088">
    <property type="entry name" value="PDEase"/>
</dbReference>
<dbReference type="InterPro" id="IPR002073">
    <property type="entry name" value="PDEase_catalytic_dom"/>
</dbReference>
<dbReference type="InterPro" id="IPR036971">
    <property type="entry name" value="PDEase_catalytic_dom_sf"/>
</dbReference>
<dbReference type="InterPro" id="IPR023174">
    <property type="entry name" value="PDEase_CS"/>
</dbReference>
<dbReference type="PANTHER" id="PTHR11347">
    <property type="entry name" value="CYCLIC NUCLEOTIDE PHOSPHODIESTERASE"/>
    <property type="match status" value="1"/>
</dbReference>
<dbReference type="Pfam" id="PF01590">
    <property type="entry name" value="GAF"/>
    <property type="match status" value="2"/>
</dbReference>
<dbReference type="Pfam" id="PF00233">
    <property type="entry name" value="PDEase_I"/>
    <property type="match status" value="1"/>
</dbReference>
<dbReference type="PRINTS" id="PR00387">
    <property type="entry name" value="PDIESTERASE1"/>
</dbReference>
<dbReference type="SMART" id="SM00065">
    <property type="entry name" value="GAF"/>
    <property type="match status" value="2"/>
</dbReference>
<dbReference type="SMART" id="SM00471">
    <property type="entry name" value="HDc"/>
    <property type="match status" value="1"/>
</dbReference>
<dbReference type="SUPFAM" id="SSF55781">
    <property type="entry name" value="GAF domain-like"/>
    <property type="match status" value="2"/>
</dbReference>
<dbReference type="SUPFAM" id="SSF109604">
    <property type="entry name" value="HD-domain/PDEase-like"/>
    <property type="match status" value="1"/>
</dbReference>
<dbReference type="PROSITE" id="PS00126">
    <property type="entry name" value="PDEASE_I_1"/>
    <property type="match status" value="1"/>
</dbReference>
<dbReference type="PROSITE" id="PS51845">
    <property type="entry name" value="PDEASE_I_2"/>
    <property type="match status" value="1"/>
</dbReference>
<sequence>MERAGPGSARPQQQWDQDSVEAWLDDHWDFTFSYFVRKGTREMVNAWFAERVHTIPVCKEGIKGHTESCSCPLQPSPRAESSVPGTPTRKISASEFDRPLRPIVIKDSEGTVSFLSDSDKKEQMPLTSPRFDNDEGDQCSRLLELVKDISSHLDVTALCHKIFLHIHGLISADRYSLFLVCEDSSNDKFLISRLFDVAEGSTLEEASNNCIRLEWNKGIVGHVAAFGEPLNIKDAYEDPRFNAEVDQITGYKTQSILCMPIKNHREEVVGVAQAINKKSGNGGTFTEKDEKDFAAYLAFCGIVLHNAQLYETSLLENKRNQVLLDLASLIFEEQQSLEVILKKIAATIISFMQVQKCTIFIVDEDCSDSFSSVFHMECEELEKSSDTLTRERDANRINYMYAQYVKNTMEPLNIPDVSKDKRFPWTNENMGNINQQCIRSLLCTPIKNGKKNKVIGVCQLVNKMEETTGKVKAFNRNDEQFLEAFVIFCGLGIQNTQMYEAVERAMAKQMVTLEVLSYHASAAEEETRELQSLAAAVVPSAQTLKITDFSFSDFELSDLETALCTIRMFTDLNLVQNFQMKHEVLCKWILSVKKNYRKNVAYHNWRHAFNTAQCMFAALKAGKIQKRLTDLEILALLIAALSHDLDHRGVNNSYIQRSEHPLAQLYCHSIMEHHHFDQCLMILNSPGNQILSGLSIEEYKTTLKIIKQAILATDLALYIKRRGEFFELIMKNQFNLEDPHQKELFLAMLMTACDLSAITKPWPIQQRIAELVATEFFDQGDRERKELNIEPADLMNREKKNKIPSMQVGFIDAICLQLYEALTHVSEDCFPLLDGCRKNRQKWQALAEQQEKTLINGESSQTKRN</sequence>
<evidence type="ECO:0000250" key="1"/>
<evidence type="ECO:0000250" key="2">
    <source>
        <dbReference type="UniProtKB" id="O76074"/>
    </source>
</evidence>
<evidence type="ECO:0000250" key="3">
    <source>
        <dbReference type="UniProtKB" id="O76083"/>
    </source>
</evidence>
<evidence type="ECO:0000255" key="4"/>
<evidence type="ECO:0000255" key="5">
    <source>
        <dbReference type="PROSITE-ProRule" id="PRU01192"/>
    </source>
</evidence>
<evidence type="ECO:0000269" key="6">
    <source>
    </source>
</evidence>
<evidence type="ECO:0000269" key="7">
    <source>
    </source>
</evidence>
<evidence type="ECO:0000269" key="8">
    <source>
    </source>
</evidence>
<evidence type="ECO:0000305" key="9"/>
<reference key="1">
    <citation type="journal article" date="1993" name="J. Biol. Chem.">
        <title>The structure of a bovine lung cGMP-binding, cGMP-specific phosphodiesterase deduced from a cDNA clone.</title>
        <authorList>
            <person name="McAllister-Lucas L.M."/>
            <person name="Sonnenburg W.K."/>
            <person name="Kadlecek A."/>
            <person name="Seger D."/>
            <person name="Trong H.L."/>
            <person name="Colbran J.L."/>
            <person name="Thomas M.K."/>
            <person name="Walsh K.A."/>
            <person name="Francis S.H."/>
            <person name="Corbin J.D."/>
            <person name="Beavo J.A."/>
        </authorList>
    </citation>
    <scope>NUCLEOTIDE SEQUENCE [MRNA]</scope>
    <scope>PROTEIN SEQUENCE OF 4-16; 39-55; 90-101; 127-138; 390-409 AND 531-539</scope>
    <source>
        <tissue>Lung</tissue>
    </source>
</reference>
<reference key="2">
    <citation type="journal article" date="1994" name="J. Biol. Chem.">
        <title>Zinc interactions and conserved motifs of the cGMP-binding cGMP-specific phosphodiesterase suggest that it is a zinc hydrolase.</title>
        <authorList>
            <person name="Francis S.H."/>
            <person name="Colbran J.L."/>
            <person name="McAllister-Lucas L.M."/>
            <person name="Corbin J.D."/>
        </authorList>
    </citation>
    <scope>METAL-BINDING</scope>
</reference>
<reference key="3">
    <citation type="journal article" date="1995" name="J. Biol. Chem.">
        <title>An essential aspartic acid at each of two allosteric cGMP-binding sites of a cGMP-specific phosphodiesterase.</title>
        <authorList>
            <person name="McAllister-Lucas L.M."/>
            <person name="Haik T.L."/>
            <person name="Colbran J.L."/>
            <person name="Sonnenburg W.K."/>
            <person name="Seger D."/>
            <person name="Turko I.V."/>
            <person name="Beavo J.A."/>
            <person name="Francis S.H."/>
            <person name="Corbin J.D."/>
        </authorList>
    </citation>
    <scope>FUNCTION</scope>
    <scope>MUTAGENESIS OF ASP-289 AND ASP-478</scope>
</reference>
<reference key="4">
    <citation type="journal article" date="1996" name="J. Biol. Chem.">
        <title>Identification of key amino acids in a conserved cGMP-binding site of cGMP-binding phosphodiesterases. A putative NKXnD motif for cGMP binding.</title>
        <authorList>
            <person name="Turko I.V."/>
            <person name="Haik T.L."/>
            <person name="McAllister-Lucas L.M."/>
            <person name="Burns F."/>
            <person name="Francis S.H."/>
            <person name="Corbin J.D."/>
        </authorList>
    </citation>
    <scope>MUTAGENESIS OF ASN-276; LYS-277; ASP-289 AND GLU-290</scope>
</reference>
<reference key="5">
    <citation type="journal article" date="1998" name="Biochem. J.">
        <title>Binding of cGMP to both allosteric sites of cGMP-binding cGMP-specific phosphodiesterase (PDE5) is required for its phosphorylation.</title>
        <authorList>
            <person name="Turko I.V."/>
            <person name="Francis S.H."/>
            <person name="Corbin J.D."/>
        </authorList>
    </citation>
    <scope>PHOSPHORYLATION</scope>
    <scope>MUTAGENESIS OF ASP-289 AND ASP-478</scope>
</reference>
<protein>
    <recommendedName>
        <fullName>cGMP-specific 3',5'-cyclic phosphodiesterase</fullName>
        <ecNumber evidence="2">3.1.4.35</ecNumber>
    </recommendedName>
    <alternativeName>
        <fullName>cGMP-binding cGMP-specific phosphodiesterase</fullName>
        <shortName>CGB-PDE</shortName>
    </alternativeName>
</protein>
<keyword id="KW-0002">3D-structure</keyword>
<keyword id="KW-0021">Allosteric enzyme</keyword>
<keyword id="KW-0140">cGMP</keyword>
<keyword id="KW-0142">cGMP-binding</keyword>
<keyword id="KW-0903">Direct protein sequencing</keyword>
<keyword id="KW-0378">Hydrolase</keyword>
<keyword id="KW-0460">Magnesium</keyword>
<keyword id="KW-0479">Metal-binding</keyword>
<keyword id="KW-0547">Nucleotide-binding</keyword>
<keyword id="KW-0597">Phosphoprotein</keyword>
<keyword id="KW-1185">Reference proteome</keyword>
<keyword id="KW-0677">Repeat</keyword>
<keyword id="KW-0862">Zinc</keyword>